<organism>
    <name type="scientific">Bacillus cereus (strain AH820)</name>
    <dbReference type="NCBI Taxonomy" id="405535"/>
    <lineage>
        <taxon>Bacteria</taxon>
        <taxon>Bacillati</taxon>
        <taxon>Bacillota</taxon>
        <taxon>Bacilli</taxon>
        <taxon>Bacillales</taxon>
        <taxon>Bacillaceae</taxon>
        <taxon>Bacillus</taxon>
        <taxon>Bacillus cereus group</taxon>
    </lineage>
</organism>
<accession>B7JJC6</accession>
<evidence type="ECO:0000255" key="1">
    <source>
        <dbReference type="HAMAP-Rule" id="MF_01824"/>
    </source>
</evidence>
<protein>
    <recommendedName>
        <fullName evidence="1">Pyridoxal 5'-phosphate synthase subunit PdxS</fullName>
        <shortName evidence="1">PLP synthase subunit PdxS</shortName>
        <ecNumber evidence="1">4.3.3.6</ecNumber>
    </recommendedName>
    <alternativeName>
        <fullName evidence="1">Pdx1</fullName>
    </alternativeName>
</protein>
<feature type="chain" id="PRO_1000188206" description="Pyridoxal 5'-phosphate synthase subunit PdxS">
    <location>
        <begin position="1"/>
        <end position="295"/>
    </location>
</feature>
<feature type="active site" description="Schiff-base intermediate with D-ribose 5-phosphate" evidence="1">
    <location>
        <position position="82"/>
    </location>
</feature>
<feature type="binding site" evidence="1">
    <location>
        <position position="25"/>
    </location>
    <ligand>
        <name>D-ribose 5-phosphate</name>
        <dbReference type="ChEBI" id="CHEBI:78346"/>
    </ligand>
</feature>
<feature type="binding site" evidence="1">
    <location>
        <position position="154"/>
    </location>
    <ligand>
        <name>D-ribose 5-phosphate</name>
        <dbReference type="ChEBI" id="CHEBI:78346"/>
    </ligand>
</feature>
<feature type="binding site" evidence="1">
    <location>
        <position position="166"/>
    </location>
    <ligand>
        <name>D-glyceraldehyde 3-phosphate</name>
        <dbReference type="ChEBI" id="CHEBI:59776"/>
    </ligand>
</feature>
<feature type="binding site" evidence="1">
    <location>
        <position position="215"/>
    </location>
    <ligand>
        <name>D-ribose 5-phosphate</name>
        <dbReference type="ChEBI" id="CHEBI:78346"/>
    </ligand>
</feature>
<feature type="binding site" evidence="1">
    <location>
        <begin position="236"/>
        <end position="237"/>
    </location>
    <ligand>
        <name>D-ribose 5-phosphate</name>
        <dbReference type="ChEBI" id="CHEBI:78346"/>
    </ligand>
</feature>
<comment type="function">
    <text evidence="1">Catalyzes the formation of pyridoxal 5'-phosphate from ribose 5-phosphate (RBP), glyceraldehyde 3-phosphate (G3P) and ammonia. The ammonia is provided by the PdxT subunit. Can also use ribulose 5-phosphate and dihydroxyacetone phosphate as substrates, resulting from enzyme-catalyzed isomerization of RBP and G3P, respectively.</text>
</comment>
<comment type="catalytic activity">
    <reaction evidence="1">
        <text>aldehydo-D-ribose 5-phosphate + D-glyceraldehyde 3-phosphate + L-glutamine = pyridoxal 5'-phosphate + L-glutamate + phosphate + 3 H2O + H(+)</text>
        <dbReference type="Rhea" id="RHEA:31507"/>
        <dbReference type="ChEBI" id="CHEBI:15377"/>
        <dbReference type="ChEBI" id="CHEBI:15378"/>
        <dbReference type="ChEBI" id="CHEBI:29985"/>
        <dbReference type="ChEBI" id="CHEBI:43474"/>
        <dbReference type="ChEBI" id="CHEBI:58273"/>
        <dbReference type="ChEBI" id="CHEBI:58359"/>
        <dbReference type="ChEBI" id="CHEBI:59776"/>
        <dbReference type="ChEBI" id="CHEBI:597326"/>
        <dbReference type="EC" id="4.3.3.6"/>
    </reaction>
</comment>
<comment type="pathway">
    <text evidence="1">Cofactor biosynthesis; pyridoxal 5'-phosphate biosynthesis.</text>
</comment>
<comment type="subunit">
    <text evidence="1">In the presence of PdxT, forms a dodecamer of heterodimers.</text>
</comment>
<comment type="similarity">
    <text evidence="1">Belongs to the PdxS/SNZ family.</text>
</comment>
<reference key="1">
    <citation type="submission" date="2008-10" db="EMBL/GenBank/DDBJ databases">
        <title>Genome sequence of Bacillus cereus AH820.</title>
        <authorList>
            <person name="Dodson R.J."/>
            <person name="Durkin A.S."/>
            <person name="Rosovitz M.J."/>
            <person name="Rasko D.A."/>
            <person name="Hoffmaster A."/>
            <person name="Ravel J."/>
            <person name="Sutton G."/>
        </authorList>
    </citation>
    <scope>NUCLEOTIDE SEQUENCE [LARGE SCALE GENOMIC DNA]</scope>
    <source>
        <strain>AH820</strain>
    </source>
</reference>
<keyword id="KW-0456">Lyase</keyword>
<keyword id="KW-0663">Pyridoxal phosphate</keyword>
<keyword id="KW-0704">Schiff base</keyword>
<name>PDXS_BACC0</name>
<gene>
    <name evidence="1" type="primary">pdxS</name>
    <name type="ordered locus">BCAH820_0014</name>
</gene>
<sequence>MTNVTGTERVKRGMAEMQKGGVIMDVINAEQAKIAEEAGAVAVMALERVPADIRAAGGVSRMADPTIVEEVMGAVSIPVMAKCRIGHLVEARVLESLGVDYIDESEVLTPADEVYHLNKRDYTVPFVCGCRDIGEAARRIAEGASMLRTKGEPGTGNIVEAVRHMRQVNAEIRQVASLREDELMTYAKNTGAPYEVLLEIKRLGRLPVVNFAAGGVATPADAALMMQLGADGVFVGSGIFKSENPAKFARAIVEATTHYEDYELIASLSKGLGNAMKGIEISTLLPEQRMQERGW</sequence>
<proteinExistence type="inferred from homology"/>
<dbReference type="EC" id="4.3.3.6" evidence="1"/>
<dbReference type="EMBL" id="CP001283">
    <property type="protein sequence ID" value="ACK90232.1"/>
    <property type="molecule type" value="Genomic_DNA"/>
</dbReference>
<dbReference type="RefSeq" id="WP_000186156.1">
    <property type="nucleotide sequence ID" value="NC_011773.1"/>
</dbReference>
<dbReference type="SMR" id="B7JJC6"/>
<dbReference type="GeneID" id="93011062"/>
<dbReference type="KEGG" id="bcu:BCAH820_0014"/>
<dbReference type="HOGENOM" id="CLU_055352_1_0_9"/>
<dbReference type="UniPathway" id="UPA00245"/>
<dbReference type="Proteomes" id="UP000001363">
    <property type="component" value="Chromosome"/>
</dbReference>
<dbReference type="GO" id="GO:0036381">
    <property type="term" value="F:pyridoxal 5'-phosphate synthase (glutamine hydrolysing) activity"/>
    <property type="evidence" value="ECO:0007669"/>
    <property type="project" value="UniProtKB-UniRule"/>
</dbReference>
<dbReference type="GO" id="GO:0006520">
    <property type="term" value="P:amino acid metabolic process"/>
    <property type="evidence" value="ECO:0007669"/>
    <property type="project" value="TreeGrafter"/>
</dbReference>
<dbReference type="GO" id="GO:0042823">
    <property type="term" value="P:pyridoxal phosphate biosynthetic process"/>
    <property type="evidence" value="ECO:0007669"/>
    <property type="project" value="UniProtKB-UniRule"/>
</dbReference>
<dbReference type="GO" id="GO:0008615">
    <property type="term" value="P:pyridoxine biosynthetic process"/>
    <property type="evidence" value="ECO:0007669"/>
    <property type="project" value="TreeGrafter"/>
</dbReference>
<dbReference type="CDD" id="cd04727">
    <property type="entry name" value="pdxS"/>
    <property type="match status" value="1"/>
</dbReference>
<dbReference type="FunFam" id="3.20.20.70:FF:000001">
    <property type="entry name" value="Pyridoxine biosynthesis protein PDX1"/>
    <property type="match status" value="1"/>
</dbReference>
<dbReference type="Gene3D" id="3.20.20.70">
    <property type="entry name" value="Aldolase class I"/>
    <property type="match status" value="1"/>
</dbReference>
<dbReference type="HAMAP" id="MF_01824">
    <property type="entry name" value="PdxS"/>
    <property type="match status" value="1"/>
</dbReference>
<dbReference type="InterPro" id="IPR013785">
    <property type="entry name" value="Aldolase_TIM"/>
</dbReference>
<dbReference type="InterPro" id="IPR001852">
    <property type="entry name" value="PdxS/SNZ"/>
</dbReference>
<dbReference type="InterPro" id="IPR033755">
    <property type="entry name" value="PdxS/SNZ_N"/>
</dbReference>
<dbReference type="InterPro" id="IPR011060">
    <property type="entry name" value="RibuloseP-bd_barrel"/>
</dbReference>
<dbReference type="NCBIfam" id="NF003215">
    <property type="entry name" value="PRK04180.1"/>
    <property type="match status" value="1"/>
</dbReference>
<dbReference type="NCBIfam" id="TIGR00343">
    <property type="entry name" value="pyridoxal 5'-phosphate synthase lyase subunit PdxS"/>
    <property type="match status" value="1"/>
</dbReference>
<dbReference type="PANTHER" id="PTHR31829">
    <property type="entry name" value="PYRIDOXAL 5'-PHOSPHATE SYNTHASE SUBUNIT SNZ1-RELATED"/>
    <property type="match status" value="1"/>
</dbReference>
<dbReference type="PANTHER" id="PTHR31829:SF0">
    <property type="entry name" value="PYRIDOXAL 5'-PHOSPHATE SYNTHASE SUBUNIT SNZ1-RELATED"/>
    <property type="match status" value="1"/>
</dbReference>
<dbReference type="Pfam" id="PF01680">
    <property type="entry name" value="SOR_SNZ"/>
    <property type="match status" value="1"/>
</dbReference>
<dbReference type="PIRSF" id="PIRSF029271">
    <property type="entry name" value="Pdx1"/>
    <property type="match status" value="1"/>
</dbReference>
<dbReference type="SUPFAM" id="SSF51366">
    <property type="entry name" value="Ribulose-phoshate binding barrel"/>
    <property type="match status" value="1"/>
</dbReference>
<dbReference type="PROSITE" id="PS01235">
    <property type="entry name" value="PDXS_SNZ_1"/>
    <property type="match status" value="1"/>
</dbReference>
<dbReference type="PROSITE" id="PS51129">
    <property type="entry name" value="PDXS_SNZ_2"/>
    <property type="match status" value="1"/>
</dbReference>